<evidence type="ECO:0000255" key="1">
    <source>
        <dbReference type="HAMAP-Rule" id="MF_01014"/>
    </source>
</evidence>
<name>HIS4_LISW6</name>
<organism>
    <name type="scientific">Listeria welshimeri serovar 6b (strain ATCC 35897 / DSM 20650 / CCUG 15529 / CIP 8149 / NCTC 11857 / SLCC 5334 / V8)</name>
    <dbReference type="NCBI Taxonomy" id="386043"/>
    <lineage>
        <taxon>Bacteria</taxon>
        <taxon>Bacillati</taxon>
        <taxon>Bacillota</taxon>
        <taxon>Bacilli</taxon>
        <taxon>Bacillales</taxon>
        <taxon>Listeriaceae</taxon>
        <taxon>Listeria</taxon>
    </lineage>
</organism>
<gene>
    <name evidence="1" type="primary">hisA</name>
    <name type="ordered locus">lwe0530</name>
</gene>
<dbReference type="EC" id="5.3.1.16" evidence="1"/>
<dbReference type="EMBL" id="AM263198">
    <property type="protein sequence ID" value="CAK19948.1"/>
    <property type="molecule type" value="Genomic_DNA"/>
</dbReference>
<dbReference type="RefSeq" id="WP_011701375.1">
    <property type="nucleotide sequence ID" value="NC_008555.1"/>
</dbReference>
<dbReference type="SMR" id="A0AG16"/>
<dbReference type="STRING" id="386043.lwe0530"/>
<dbReference type="GeneID" id="61188418"/>
<dbReference type="KEGG" id="lwe:lwe0530"/>
<dbReference type="eggNOG" id="COG0106">
    <property type="taxonomic scope" value="Bacteria"/>
</dbReference>
<dbReference type="HOGENOM" id="CLU_048577_1_1_9"/>
<dbReference type="OrthoDB" id="9807749at2"/>
<dbReference type="UniPathway" id="UPA00031">
    <property type="reaction ID" value="UER00009"/>
</dbReference>
<dbReference type="Proteomes" id="UP000000779">
    <property type="component" value="Chromosome"/>
</dbReference>
<dbReference type="GO" id="GO:0005737">
    <property type="term" value="C:cytoplasm"/>
    <property type="evidence" value="ECO:0007669"/>
    <property type="project" value="UniProtKB-SubCell"/>
</dbReference>
<dbReference type="GO" id="GO:0003949">
    <property type="term" value="F:1-(5-phosphoribosyl)-5-[(5-phosphoribosylamino)methylideneamino]imidazole-4-carboxamide isomerase activity"/>
    <property type="evidence" value="ECO:0007669"/>
    <property type="project" value="UniProtKB-UniRule"/>
</dbReference>
<dbReference type="GO" id="GO:0000105">
    <property type="term" value="P:L-histidine biosynthetic process"/>
    <property type="evidence" value="ECO:0007669"/>
    <property type="project" value="UniProtKB-UniRule"/>
</dbReference>
<dbReference type="GO" id="GO:0000162">
    <property type="term" value="P:L-tryptophan biosynthetic process"/>
    <property type="evidence" value="ECO:0007669"/>
    <property type="project" value="TreeGrafter"/>
</dbReference>
<dbReference type="CDD" id="cd04732">
    <property type="entry name" value="HisA"/>
    <property type="match status" value="1"/>
</dbReference>
<dbReference type="FunFam" id="3.20.20.70:FF:000009">
    <property type="entry name" value="1-(5-phosphoribosyl)-5-[(5-phosphoribosylamino)methylideneamino] imidazole-4-carboxamide isomerase"/>
    <property type="match status" value="1"/>
</dbReference>
<dbReference type="Gene3D" id="3.20.20.70">
    <property type="entry name" value="Aldolase class I"/>
    <property type="match status" value="1"/>
</dbReference>
<dbReference type="HAMAP" id="MF_01014">
    <property type="entry name" value="HisA"/>
    <property type="match status" value="1"/>
</dbReference>
<dbReference type="InterPro" id="IPR013785">
    <property type="entry name" value="Aldolase_TIM"/>
</dbReference>
<dbReference type="InterPro" id="IPR006062">
    <property type="entry name" value="His_biosynth"/>
</dbReference>
<dbReference type="InterPro" id="IPR006063">
    <property type="entry name" value="HisA_bact_arch"/>
</dbReference>
<dbReference type="InterPro" id="IPR044524">
    <property type="entry name" value="Isoase_HisA-like"/>
</dbReference>
<dbReference type="InterPro" id="IPR023016">
    <property type="entry name" value="Isoase_HisA-like_bact"/>
</dbReference>
<dbReference type="InterPro" id="IPR011060">
    <property type="entry name" value="RibuloseP-bd_barrel"/>
</dbReference>
<dbReference type="NCBIfam" id="TIGR00007">
    <property type="entry name" value="1-(5-phosphoribosyl)-5-[(5-phosphoribosylamino)methylideneamino]imidazole-4-carboxamide isomerase"/>
    <property type="match status" value="1"/>
</dbReference>
<dbReference type="PANTHER" id="PTHR43090">
    <property type="entry name" value="1-(5-PHOSPHORIBOSYL)-5-[(5-PHOSPHORIBOSYLAMINO)METHYLIDENEAMINO] IMIDAZOLE-4-CARBOXAMIDE ISOMERASE"/>
    <property type="match status" value="1"/>
</dbReference>
<dbReference type="PANTHER" id="PTHR43090:SF2">
    <property type="entry name" value="1-(5-PHOSPHORIBOSYL)-5-[(5-PHOSPHORIBOSYLAMINO)METHYLIDENEAMINO] IMIDAZOLE-4-CARBOXAMIDE ISOMERASE"/>
    <property type="match status" value="1"/>
</dbReference>
<dbReference type="Pfam" id="PF00977">
    <property type="entry name" value="His_biosynth"/>
    <property type="match status" value="1"/>
</dbReference>
<dbReference type="SUPFAM" id="SSF51366">
    <property type="entry name" value="Ribulose-phoshate binding barrel"/>
    <property type="match status" value="1"/>
</dbReference>
<accession>A0AG16</accession>
<protein>
    <recommendedName>
        <fullName evidence="1">1-(5-phosphoribosyl)-5-[(5-phosphoribosylamino)methylideneamino] imidazole-4-carboxamide isomerase</fullName>
        <ecNumber evidence="1">5.3.1.16</ecNumber>
    </recommendedName>
    <alternativeName>
        <fullName evidence="1">Phosphoribosylformimino-5-aminoimidazole carboxamide ribotide isomerase</fullName>
    </alternativeName>
</protein>
<feature type="chain" id="PRO_0000290489" description="1-(5-phosphoribosyl)-5-[(5-phosphoribosylamino)methylideneamino] imidazole-4-carboxamide isomerase">
    <location>
        <begin position="1"/>
        <end position="240"/>
    </location>
</feature>
<feature type="active site" description="Proton acceptor" evidence="1">
    <location>
        <position position="8"/>
    </location>
</feature>
<feature type="active site" description="Proton donor" evidence="1">
    <location>
        <position position="129"/>
    </location>
</feature>
<proteinExistence type="inferred from homology"/>
<keyword id="KW-0028">Amino-acid biosynthesis</keyword>
<keyword id="KW-0963">Cytoplasm</keyword>
<keyword id="KW-0368">Histidine biosynthesis</keyword>
<keyword id="KW-0413">Isomerase</keyword>
<sequence>MQIFPAIDLKNGQCVRLFQGDFSKKMIVNEDPIAQAKAFATGGATYLHIVDLDGALEGRPVNLEIIQKMKEAATVPVQVGGGIRSLAQVDYYLDSGIDRVIIGSAALTNPDFLHAAVQKYGPKIAVGIDAKNGYVATSGWLEVSQVNYLDLAKQMEKVGVETIIYTDISRDGTLTGPNLEQMAALQKHVNIHLIASGGVSSRADLEALSQLGLYGAIAGKALYNGHISMSDVTEVENHAY</sequence>
<reference key="1">
    <citation type="journal article" date="2006" name="J. Bacteriol.">
        <title>Whole-genome sequence of Listeria welshimeri reveals common steps in genome reduction with Listeria innocua as compared to Listeria monocytogenes.</title>
        <authorList>
            <person name="Hain T."/>
            <person name="Steinweg C."/>
            <person name="Kuenne C.T."/>
            <person name="Billion A."/>
            <person name="Ghai R."/>
            <person name="Chatterjee S.S."/>
            <person name="Domann E."/>
            <person name="Kaerst U."/>
            <person name="Goesmann A."/>
            <person name="Bekel T."/>
            <person name="Bartels D."/>
            <person name="Kaiser O."/>
            <person name="Meyer F."/>
            <person name="Puehler A."/>
            <person name="Weisshaar B."/>
            <person name="Wehland J."/>
            <person name="Liang C."/>
            <person name="Dandekar T."/>
            <person name="Lampidis R."/>
            <person name="Kreft J."/>
            <person name="Goebel W."/>
            <person name="Chakraborty T."/>
        </authorList>
    </citation>
    <scope>NUCLEOTIDE SEQUENCE [LARGE SCALE GENOMIC DNA]</scope>
    <source>
        <strain>ATCC 35897 / DSM 20650 / CCUG 15529 / CIP 8149 / NCTC 11857 / SLCC 5334 / V8</strain>
    </source>
</reference>
<comment type="catalytic activity">
    <reaction evidence="1">
        <text>1-(5-phospho-beta-D-ribosyl)-5-[(5-phospho-beta-D-ribosylamino)methylideneamino]imidazole-4-carboxamide = 5-[(5-phospho-1-deoxy-D-ribulos-1-ylimino)methylamino]-1-(5-phospho-beta-D-ribosyl)imidazole-4-carboxamide</text>
        <dbReference type="Rhea" id="RHEA:15469"/>
        <dbReference type="ChEBI" id="CHEBI:58435"/>
        <dbReference type="ChEBI" id="CHEBI:58525"/>
        <dbReference type="EC" id="5.3.1.16"/>
    </reaction>
</comment>
<comment type="pathway">
    <text evidence="1">Amino-acid biosynthesis; L-histidine biosynthesis; L-histidine from 5-phospho-alpha-D-ribose 1-diphosphate: step 4/9.</text>
</comment>
<comment type="subcellular location">
    <subcellularLocation>
        <location evidence="1">Cytoplasm</location>
    </subcellularLocation>
</comment>
<comment type="similarity">
    <text evidence="1">Belongs to the HisA/HisF family.</text>
</comment>